<evidence type="ECO:0000255" key="1">
    <source>
        <dbReference type="HAMAP-Rule" id="MF_00061"/>
    </source>
</evidence>
<protein>
    <recommendedName>
        <fullName evidence="1">4-diphosphocytidyl-2-C-methyl-D-erythritol kinase</fullName>
        <shortName evidence="1">CMK</shortName>
        <ecNumber evidence="1">2.7.1.148</ecNumber>
    </recommendedName>
    <alternativeName>
        <fullName evidence="1">4-(cytidine-5'-diphospho)-2-C-methyl-D-erythritol kinase</fullName>
    </alternativeName>
</protein>
<gene>
    <name evidence="1" type="primary">ispE</name>
    <name type="ordered locus">SYNAS_18840</name>
    <name type="ORF">SYN_03046</name>
</gene>
<dbReference type="EC" id="2.7.1.148" evidence="1"/>
<dbReference type="EMBL" id="CP000252">
    <property type="protein sequence ID" value="ABC77763.1"/>
    <property type="molecule type" value="Genomic_DNA"/>
</dbReference>
<dbReference type="RefSeq" id="WP_011417785.1">
    <property type="nucleotide sequence ID" value="NC_007759.1"/>
</dbReference>
<dbReference type="SMR" id="Q2LUJ9"/>
<dbReference type="FunCoup" id="Q2LUJ9">
    <property type="interactions" value="278"/>
</dbReference>
<dbReference type="STRING" id="56780.SYN_03046"/>
<dbReference type="KEGG" id="sat:SYN_03046"/>
<dbReference type="eggNOG" id="COG1947">
    <property type="taxonomic scope" value="Bacteria"/>
</dbReference>
<dbReference type="HOGENOM" id="CLU_053057_2_0_7"/>
<dbReference type="InParanoid" id="Q2LUJ9"/>
<dbReference type="UniPathway" id="UPA00056">
    <property type="reaction ID" value="UER00094"/>
</dbReference>
<dbReference type="Proteomes" id="UP000001933">
    <property type="component" value="Chromosome"/>
</dbReference>
<dbReference type="GO" id="GO:0050515">
    <property type="term" value="F:4-(cytidine 5'-diphospho)-2-C-methyl-D-erythritol kinase activity"/>
    <property type="evidence" value="ECO:0007669"/>
    <property type="project" value="UniProtKB-UniRule"/>
</dbReference>
<dbReference type="GO" id="GO:0005524">
    <property type="term" value="F:ATP binding"/>
    <property type="evidence" value="ECO:0007669"/>
    <property type="project" value="UniProtKB-UniRule"/>
</dbReference>
<dbReference type="GO" id="GO:0019288">
    <property type="term" value="P:isopentenyl diphosphate biosynthetic process, methylerythritol 4-phosphate pathway"/>
    <property type="evidence" value="ECO:0007669"/>
    <property type="project" value="UniProtKB-UniRule"/>
</dbReference>
<dbReference type="GO" id="GO:0016114">
    <property type="term" value="P:terpenoid biosynthetic process"/>
    <property type="evidence" value="ECO:0007669"/>
    <property type="project" value="InterPro"/>
</dbReference>
<dbReference type="Gene3D" id="3.30.230.10">
    <property type="match status" value="1"/>
</dbReference>
<dbReference type="Gene3D" id="3.30.70.890">
    <property type="entry name" value="GHMP kinase, C-terminal domain"/>
    <property type="match status" value="1"/>
</dbReference>
<dbReference type="HAMAP" id="MF_00061">
    <property type="entry name" value="IspE"/>
    <property type="match status" value="1"/>
</dbReference>
<dbReference type="InterPro" id="IPR013750">
    <property type="entry name" value="GHMP_kinase_C_dom"/>
</dbReference>
<dbReference type="InterPro" id="IPR036554">
    <property type="entry name" value="GHMP_kinase_C_sf"/>
</dbReference>
<dbReference type="InterPro" id="IPR006204">
    <property type="entry name" value="GHMP_kinase_N_dom"/>
</dbReference>
<dbReference type="InterPro" id="IPR004424">
    <property type="entry name" value="IspE"/>
</dbReference>
<dbReference type="InterPro" id="IPR020568">
    <property type="entry name" value="Ribosomal_Su5_D2-typ_SF"/>
</dbReference>
<dbReference type="InterPro" id="IPR014721">
    <property type="entry name" value="Ribsml_uS5_D2-typ_fold_subgr"/>
</dbReference>
<dbReference type="NCBIfam" id="TIGR00154">
    <property type="entry name" value="ispE"/>
    <property type="match status" value="1"/>
</dbReference>
<dbReference type="NCBIfam" id="NF011202">
    <property type="entry name" value="PRK14608.1"/>
    <property type="match status" value="1"/>
</dbReference>
<dbReference type="PANTHER" id="PTHR43527">
    <property type="entry name" value="4-DIPHOSPHOCYTIDYL-2-C-METHYL-D-ERYTHRITOL KINASE, CHLOROPLASTIC"/>
    <property type="match status" value="1"/>
</dbReference>
<dbReference type="PANTHER" id="PTHR43527:SF2">
    <property type="entry name" value="4-DIPHOSPHOCYTIDYL-2-C-METHYL-D-ERYTHRITOL KINASE, CHLOROPLASTIC"/>
    <property type="match status" value="1"/>
</dbReference>
<dbReference type="Pfam" id="PF08544">
    <property type="entry name" value="GHMP_kinases_C"/>
    <property type="match status" value="1"/>
</dbReference>
<dbReference type="Pfam" id="PF00288">
    <property type="entry name" value="GHMP_kinases_N"/>
    <property type="match status" value="1"/>
</dbReference>
<dbReference type="PIRSF" id="PIRSF010376">
    <property type="entry name" value="IspE"/>
    <property type="match status" value="1"/>
</dbReference>
<dbReference type="SUPFAM" id="SSF55060">
    <property type="entry name" value="GHMP Kinase, C-terminal domain"/>
    <property type="match status" value="1"/>
</dbReference>
<dbReference type="SUPFAM" id="SSF54211">
    <property type="entry name" value="Ribosomal protein S5 domain 2-like"/>
    <property type="match status" value="1"/>
</dbReference>
<reference key="1">
    <citation type="journal article" date="2007" name="Proc. Natl. Acad. Sci. U.S.A.">
        <title>The genome of Syntrophus aciditrophicus: life at the thermodynamic limit of microbial growth.</title>
        <authorList>
            <person name="McInerney M.J."/>
            <person name="Rohlin L."/>
            <person name="Mouttaki H."/>
            <person name="Kim U."/>
            <person name="Krupp R.S."/>
            <person name="Rios-Hernandez L."/>
            <person name="Sieber J."/>
            <person name="Struchtemeyer C.G."/>
            <person name="Bhattacharyya A."/>
            <person name="Campbell J.W."/>
            <person name="Gunsalus R.P."/>
        </authorList>
    </citation>
    <scope>NUCLEOTIDE SEQUENCE [LARGE SCALE GENOMIC DNA]</scope>
    <source>
        <strain>SB</strain>
    </source>
</reference>
<proteinExistence type="inferred from homology"/>
<organism>
    <name type="scientific">Syntrophus aciditrophicus (strain SB)</name>
    <dbReference type="NCBI Taxonomy" id="56780"/>
    <lineage>
        <taxon>Bacteria</taxon>
        <taxon>Pseudomonadati</taxon>
        <taxon>Thermodesulfobacteriota</taxon>
        <taxon>Syntrophia</taxon>
        <taxon>Syntrophales</taxon>
        <taxon>Syntrophaceae</taxon>
        <taxon>Syntrophus</taxon>
    </lineage>
</organism>
<keyword id="KW-0067">ATP-binding</keyword>
<keyword id="KW-0414">Isoprene biosynthesis</keyword>
<keyword id="KW-0418">Kinase</keyword>
<keyword id="KW-0547">Nucleotide-binding</keyword>
<keyword id="KW-1185">Reference proteome</keyword>
<keyword id="KW-0808">Transferase</keyword>
<name>ISPE_SYNAS</name>
<sequence>MLKILSPAKVNLHLRVLRKREDNYHDLATLMQKVSLYDELEFQPSNRGIQLRCPGFFLPENEENIVFRAAKKILSFSGCPTGVTITLRKNIPLAAGLGGGSSNAAMTLLALNKLFRLNFSTGELMKIGATLGADVPFFLFHGPAWAYGIGDRLKAALDVPKVWFVLINPGFEVSTRVIYEKLNLGLTKEIIHYSIPRFLSMEDMAAGLHNDLESVTLKMHPSLQEIKDLLCSYGAAGALMSGSGPTVFGIFENEDKAKEAETVLGKPGTWAVFCVRSID</sequence>
<accession>Q2LUJ9</accession>
<feature type="chain" id="PRO_0000235146" description="4-diphosphocytidyl-2-C-methyl-D-erythritol kinase">
    <location>
        <begin position="1"/>
        <end position="279"/>
    </location>
</feature>
<feature type="active site" evidence="1">
    <location>
        <position position="9"/>
    </location>
</feature>
<feature type="active site" evidence="1">
    <location>
        <position position="134"/>
    </location>
</feature>
<feature type="binding site" evidence="1">
    <location>
        <begin position="92"/>
        <end position="102"/>
    </location>
    <ligand>
        <name>ATP</name>
        <dbReference type="ChEBI" id="CHEBI:30616"/>
    </ligand>
</feature>
<comment type="function">
    <text evidence="1">Catalyzes the phosphorylation of the position 2 hydroxy group of 4-diphosphocytidyl-2C-methyl-D-erythritol.</text>
</comment>
<comment type="catalytic activity">
    <reaction evidence="1">
        <text>4-CDP-2-C-methyl-D-erythritol + ATP = 4-CDP-2-C-methyl-D-erythritol 2-phosphate + ADP + H(+)</text>
        <dbReference type="Rhea" id="RHEA:18437"/>
        <dbReference type="ChEBI" id="CHEBI:15378"/>
        <dbReference type="ChEBI" id="CHEBI:30616"/>
        <dbReference type="ChEBI" id="CHEBI:57823"/>
        <dbReference type="ChEBI" id="CHEBI:57919"/>
        <dbReference type="ChEBI" id="CHEBI:456216"/>
        <dbReference type="EC" id="2.7.1.148"/>
    </reaction>
</comment>
<comment type="pathway">
    <text evidence="1">Isoprenoid biosynthesis; isopentenyl diphosphate biosynthesis via DXP pathway; isopentenyl diphosphate from 1-deoxy-D-xylulose 5-phosphate: step 3/6.</text>
</comment>
<comment type="similarity">
    <text evidence="1">Belongs to the GHMP kinase family. IspE subfamily.</text>
</comment>